<protein>
    <recommendedName>
        <fullName>Proto-oncogene Mas</fullName>
    </recommendedName>
</protein>
<feature type="chain" id="PRO_0000069714" description="Proto-oncogene Mas">
    <location>
        <begin position="1"/>
        <end position="325"/>
    </location>
</feature>
<feature type="topological domain" description="Extracellular" evidence="2">
    <location>
        <begin position="1"/>
        <end position="36"/>
    </location>
</feature>
<feature type="transmembrane region" description="Helical; Name=1" evidence="2">
    <location>
        <begin position="37"/>
        <end position="61"/>
    </location>
</feature>
<feature type="topological domain" description="Cytoplasmic" evidence="2">
    <location>
        <begin position="62"/>
        <end position="65"/>
    </location>
</feature>
<feature type="transmembrane region" description="Helical; Name=2" evidence="2">
    <location>
        <begin position="66"/>
        <end position="86"/>
    </location>
</feature>
<feature type="topological domain" description="Extracellular" evidence="2">
    <location>
        <begin position="87"/>
        <end position="104"/>
    </location>
</feature>
<feature type="transmembrane region" description="Helical; Name=3" evidence="2">
    <location>
        <begin position="105"/>
        <end position="128"/>
    </location>
</feature>
<feature type="topological domain" description="Cytoplasmic" evidence="2">
    <location>
        <begin position="129"/>
        <end position="149"/>
    </location>
</feature>
<feature type="transmembrane region" description="Helical; Name=4" evidence="2">
    <location>
        <begin position="150"/>
        <end position="172"/>
    </location>
</feature>
<feature type="topological domain" description="Extracellular" evidence="2">
    <location>
        <begin position="173"/>
        <end position="185"/>
    </location>
</feature>
<feature type="transmembrane region" description="Helical; Name=5" evidence="2">
    <location>
        <begin position="186"/>
        <end position="206"/>
    </location>
</feature>
<feature type="topological domain" description="Cytoplasmic" evidence="2">
    <location>
        <begin position="207"/>
        <end position="224"/>
    </location>
</feature>
<feature type="transmembrane region" description="Helical; Name=6" evidence="2">
    <location>
        <begin position="225"/>
        <end position="245"/>
    </location>
</feature>
<feature type="topological domain" description="Extracellular" evidence="2">
    <location>
        <begin position="246"/>
        <end position="263"/>
    </location>
</feature>
<feature type="transmembrane region" description="Helical; Name=7" evidence="2">
    <location>
        <begin position="264"/>
        <end position="284"/>
    </location>
</feature>
<feature type="topological domain" description="Cytoplasmic" evidence="2">
    <location>
        <begin position="285"/>
        <end position="325"/>
    </location>
</feature>
<feature type="glycosylation site" description="N-linked (GlcNAc...) asparagine" evidence="2">
    <location>
        <position position="5"/>
    </location>
</feature>
<feature type="glycosylation site" description="N-linked (GlcNAc...) asparagine" evidence="2">
    <location>
        <position position="16"/>
    </location>
</feature>
<feature type="glycosylation site" description="N-linked (GlcNAc...) asparagine" evidence="2">
    <location>
        <position position="22"/>
    </location>
</feature>
<feature type="mutagenesis site" description="Fails to activate GNA11." evidence="5">
    <original>I</original>
    <variation>D</variation>
    <location>
        <position position="138"/>
    </location>
</feature>
<keyword id="KW-1003">Cell membrane</keyword>
<keyword id="KW-0297">G-protein coupled receptor</keyword>
<keyword id="KW-0325">Glycoprotein</keyword>
<keyword id="KW-0472">Membrane</keyword>
<keyword id="KW-0656">Proto-oncogene</keyword>
<keyword id="KW-0675">Receptor</keyword>
<keyword id="KW-1185">Reference proteome</keyword>
<keyword id="KW-0807">Transducer</keyword>
<keyword id="KW-0812">Transmembrane</keyword>
<keyword id="KW-1133">Transmembrane helix</keyword>
<proteinExistence type="evidence at protein level"/>
<evidence type="ECO:0000250" key="1"/>
<evidence type="ECO:0000255" key="2"/>
<evidence type="ECO:0000255" key="3">
    <source>
        <dbReference type="PROSITE-ProRule" id="PRU00521"/>
    </source>
</evidence>
<evidence type="ECO:0000269" key="4">
    <source>
    </source>
</evidence>
<evidence type="ECO:0000269" key="5">
    <source>
    </source>
</evidence>
<evidence type="ECO:0000269" key="6">
    <source>
    </source>
</evidence>
<evidence type="ECO:0000269" key="7">
    <source>
    </source>
</evidence>
<evidence type="ECO:0000305" key="8">
    <source>
    </source>
</evidence>
<evidence type="ECO:0000305" key="9">
    <source>
    </source>
</evidence>
<organism>
    <name type="scientific">Homo sapiens</name>
    <name type="common">Human</name>
    <dbReference type="NCBI Taxonomy" id="9606"/>
    <lineage>
        <taxon>Eukaryota</taxon>
        <taxon>Metazoa</taxon>
        <taxon>Chordata</taxon>
        <taxon>Craniata</taxon>
        <taxon>Vertebrata</taxon>
        <taxon>Euteleostomi</taxon>
        <taxon>Mammalia</taxon>
        <taxon>Eutheria</taxon>
        <taxon>Euarchontoglires</taxon>
        <taxon>Primates</taxon>
        <taxon>Haplorrhini</taxon>
        <taxon>Catarrhini</taxon>
        <taxon>Hominidae</taxon>
        <taxon>Homo</taxon>
    </lineage>
</organism>
<gene>
    <name type="primary">MAS1</name>
    <name type="synonym">MAS</name>
</gene>
<accession>P04201</accession>
<accession>E1P5B3</accession>
<accession>Q2TBC9</accession>
<accession>Q6FG47</accession>
<reference key="1">
    <citation type="journal article" date="1986" name="Cell">
        <title>Isolation and characterization of a new cellular oncogene encoding a protein with multiple potential transmembrane domains.</title>
        <authorList>
            <person name="Young D."/>
            <person name="Waitches G."/>
            <person name="Birchmeier C."/>
            <person name="Fasano O."/>
            <person name="Wigler M."/>
        </authorList>
    </citation>
    <scope>NUCLEOTIDE SEQUENCE [MRNA]</scope>
</reference>
<reference key="2">
    <citation type="submission" date="2004-06" db="EMBL/GenBank/DDBJ databases">
        <title>Cloning of human full open reading frames in Gateway(TM) system entry vector (pDONR201).</title>
        <authorList>
            <person name="Halleck A."/>
            <person name="Ebert L."/>
            <person name="Mkoundinya M."/>
            <person name="Schick M."/>
            <person name="Eisenstein S."/>
            <person name="Neubert P."/>
            <person name="Kstrang K."/>
            <person name="Schatten R."/>
            <person name="Shen B."/>
            <person name="Henze S."/>
            <person name="Mar W."/>
            <person name="Korn B."/>
            <person name="Zuo D."/>
            <person name="Hu Y."/>
            <person name="LaBaer J."/>
        </authorList>
    </citation>
    <scope>NUCLEOTIDE SEQUENCE [LARGE SCALE MRNA]</scope>
</reference>
<reference key="3">
    <citation type="journal article" date="2003" name="Nature">
        <title>The DNA sequence and analysis of human chromosome 6.</title>
        <authorList>
            <person name="Mungall A.J."/>
            <person name="Palmer S.A."/>
            <person name="Sims S.K."/>
            <person name="Edwards C.A."/>
            <person name="Ashurst J.L."/>
            <person name="Wilming L."/>
            <person name="Jones M.C."/>
            <person name="Horton R."/>
            <person name="Hunt S.E."/>
            <person name="Scott C.E."/>
            <person name="Gilbert J.G.R."/>
            <person name="Clamp M.E."/>
            <person name="Bethel G."/>
            <person name="Milne S."/>
            <person name="Ainscough R."/>
            <person name="Almeida J.P."/>
            <person name="Ambrose K.D."/>
            <person name="Andrews T.D."/>
            <person name="Ashwell R.I.S."/>
            <person name="Babbage A.K."/>
            <person name="Bagguley C.L."/>
            <person name="Bailey J."/>
            <person name="Banerjee R."/>
            <person name="Barker D.J."/>
            <person name="Barlow K.F."/>
            <person name="Bates K."/>
            <person name="Beare D.M."/>
            <person name="Beasley H."/>
            <person name="Beasley O."/>
            <person name="Bird C.P."/>
            <person name="Blakey S.E."/>
            <person name="Bray-Allen S."/>
            <person name="Brook J."/>
            <person name="Brown A.J."/>
            <person name="Brown J.Y."/>
            <person name="Burford D.C."/>
            <person name="Burrill W."/>
            <person name="Burton J."/>
            <person name="Carder C."/>
            <person name="Carter N.P."/>
            <person name="Chapman J.C."/>
            <person name="Clark S.Y."/>
            <person name="Clark G."/>
            <person name="Clee C.M."/>
            <person name="Clegg S."/>
            <person name="Cobley V."/>
            <person name="Collier R.E."/>
            <person name="Collins J.E."/>
            <person name="Colman L.K."/>
            <person name="Corby N.R."/>
            <person name="Coville G.J."/>
            <person name="Culley K.M."/>
            <person name="Dhami P."/>
            <person name="Davies J."/>
            <person name="Dunn M."/>
            <person name="Earthrowl M.E."/>
            <person name="Ellington A.E."/>
            <person name="Evans K.A."/>
            <person name="Faulkner L."/>
            <person name="Francis M.D."/>
            <person name="Frankish A."/>
            <person name="Frankland J."/>
            <person name="French L."/>
            <person name="Garner P."/>
            <person name="Garnett J."/>
            <person name="Ghori M.J."/>
            <person name="Gilby L.M."/>
            <person name="Gillson C.J."/>
            <person name="Glithero R.J."/>
            <person name="Grafham D.V."/>
            <person name="Grant M."/>
            <person name="Gribble S."/>
            <person name="Griffiths C."/>
            <person name="Griffiths M.N.D."/>
            <person name="Hall R."/>
            <person name="Halls K.S."/>
            <person name="Hammond S."/>
            <person name="Harley J.L."/>
            <person name="Hart E.A."/>
            <person name="Heath P.D."/>
            <person name="Heathcott R."/>
            <person name="Holmes S.J."/>
            <person name="Howden P.J."/>
            <person name="Howe K.L."/>
            <person name="Howell G.R."/>
            <person name="Huckle E."/>
            <person name="Humphray S.J."/>
            <person name="Humphries M.D."/>
            <person name="Hunt A.R."/>
            <person name="Johnson C.M."/>
            <person name="Joy A.A."/>
            <person name="Kay M."/>
            <person name="Keenan S.J."/>
            <person name="Kimberley A.M."/>
            <person name="King A."/>
            <person name="Laird G.K."/>
            <person name="Langford C."/>
            <person name="Lawlor S."/>
            <person name="Leongamornlert D.A."/>
            <person name="Leversha M."/>
            <person name="Lloyd C.R."/>
            <person name="Lloyd D.M."/>
            <person name="Loveland J.E."/>
            <person name="Lovell J."/>
            <person name="Martin S."/>
            <person name="Mashreghi-Mohammadi M."/>
            <person name="Maslen G.L."/>
            <person name="Matthews L."/>
            <person name="McCann O.T."/>
            <person name="McLaren S.J."/>
            <person name="McLay K."/>
            <person name="McMurray A."/>
            <person name="Moore M.J.F."/>
            <person name="Mullikin J.C."/>
            <person name="Niblett D."/>
            <person name="Nickerson T."/>
            <person name="Novik K.L."/>
            <person name="Oliver K."/>
            <person name="Overton-Larty E.K."/>
            <person name="Parker A."/>
            <person name="Patel R."/>
            <person name="Pearce A.V."/>
            <person name="Peck A.I."/>
            <person name="Phillimore B.J.C.T."/>
            <person name="Phillips S."/>
            <person name="Plumb R.W."/>
            <person name="Porter K.M."/>
            <person name="Ramsey Y."/>
            <person name="Ranby S.A."/>
            <person name="Rice C.M."/>
            <person name="Ross M.T."/>
            <person name="Searle S.M."/>
            <person name="Sehra H.K."/>
            <person name="Sheridan E."/>
            <person name="Skuce C.D."/>
            <person name="Smith S."/>
            <person name="Smith M."/>
            <person name="Spraggon L."/>
            <person name="Squares S.L."/>
            <person name="Steward C.A."/>
            <person name="Sycamore N."/>
            <person name="Tamlyn-Hall G."/>
            <person name="Tester J."/>
            <person name="Theaker A.J."/>
            <person name="Thomas D.W."/>
            <person name="Thorpe A."/>
            <person name="Tracey A."/>
            <person name="Tromans A."/>
            <person name="Tubby B."/>
            <person name="Wall M."/>
            <person name="Wallis J.M."/>
            <person name="West A.P."/>
            <person name="White S.S."/>
            <person name="Whitehead S.L."/>
            <person name="Whittaker H."/>
            <person name="Wild A."/>
            <person name="Willey D.J."/>
            <person name="Wilmer T.E."/>
            <person name="Wood J.M."/>
            <person name="Wray P.W."/>
            <person name="Wyatt J.C."/>
            <person name="Young L."/>
            <person name="Younger R.M."/>
            <person name="Bentley D.R."/>
            <person name="Coulson A."/>
            <person name="Durbin R.M."/>
            <person name="Hubbard T."/>
            <person name="Sulston J.E."/>
            <person name="Dunham I."/>
            <person name="Rogers J."/>
            <person name="Beck S."/>
        </authorList>
    </citation>
    <scope>NUCLEOTIDE SEQUENCE [LARGE SCALE GENOMIC DNA]</scope>
</reference>
<reference key="4">
    <citation type="submission" date="2005-09" db="EMBL/GenBank/DDBJ databases">
        <authorList>
            <person name="Mural R.J."/>
            <person name="Istrail S."/>
            <person name="Sutton G.G."/>
            <person name="Florea L."/>
            <person name="Halpern A.L."/>
            <person name="Mobarry C.M."/>
            <person name="Lippert R."/>
            <person name="Walenz B."/>
            <person name="Shatkay H."/>
            <person name="Dew I."/>
            <person name="Miller J.R."/>
            <person name="Flanigan M.J."/>
            <person name="Edwards N.J."/>
            <person name="Bolanos R."/>
            <person name="Fasulo D."/>
            <person name="Halldorsson B.V."/>
            <person name="Hannenhalli S."/>
            <person name="Turner R."/>
            <person name="Yooseph S."/>
            <person name="Lu F."/>
            <person name="Nusskern D.R."/>
            <person name="Shue B.C."/>
            <person name="Zheng X.H."/>
            <person name="Zhong F."/>
            <person name="Delcher A.L."/>
            <person name="Huson D.H."/>
            <person name="Kravitz S.A."/>
            <person name="Mouchard L."/>
            <person name="Reinert K."/>
            <person name="Remington K.A."/>
            <person name="Clark A.G."/>
            <person name="Waterman M.S."/>
            <person name="Eichler E.E."/>
            <person name="Adams M.D."/>
            <person name="Hunkapiller M.W."/>
            <person name="Myers E.W."/>
            <person name="Venter J.C."/>
        </authorList>
    </citation>
    <scope>NUCLEOTIDE SEQUENCE [LARGE SCALE GENOMIC DNA]</scope>
</reference>
<reference key="5">
    <citation type="journal article" date="2004" name="Genome Res.">
        <title>The status, quality, and expansion of the NIH full-length cDNA project: the Mammalian Gene Collection (MGC).</title>
        <authorList>
            <consortium name="The MGC Project Team"/>
        </authorList>
    </citation>
    <scope>NUCLEOTIDE SEQUENCE [LARGE SCALE MRNA]</scope>
</reference>
<reference key="6">
    <citation type="journal article" date="1988" name="Nature">
        <title>The mas oncogene encodes an angiotensin receptor.</title>
        <authorList>
            <person name="Jackson T.R."/>
            <person name="Blair L.A.C."/>
            <person name="Marshall J."/>
            <person name="Goedert M."/>
            <person name="Hanley M.R."/>
        </authorList>
    </citation>
    <scope>PRELIMINARY FUNCTION</scope>
</reference>
<reference key="7">
    <citation type="journal article" date="2005" name="Circulation">
        <title>G-protein-coupled receptor Mas is a physiological antagonist of the angiotensin II type 1 receptor.</title>
        <authorList>
            <person name="Kostenis E."/>
            <person name="Milligan G."/>
            <person name="Christopoulos A."/>
            <person name="Sanchez-Ferrer C.F."/>
            <person name="Heringer-Walther S."/>
            <person name="Sexton P.M."/>
            <person name="Gembardt F."/>
            <person name="Kellett E."/>
            <person name="Martini L."/>
            <person name="Vanderheyden P."/>
            <person name="Schultheiss H.P."/>
            <person name="Walther T."/>
        </authorList>
    </citation>
    <scope>FUNCTION AS AGTR1 ANTAGONIST</scope>
    <scope>INTERACTION WITH AGTR1</scope>
</reference>
<reference key="8">
    <citation type="journal article" date="2006" name="J. Biol. Chem.">
        <title>Up-regulation of the angiotensin II type 1 receptor by the MAS proto-oncogene is due to constitutive activation of Gq/G11 by MAS.</title>
        <authorList>
            <person name="Canals M."/>
            <person name="Jenkins L."/>
            <person name="Kellett E."/>
            <person name="Milligan G."/>
        </authorList>
    </citation>
    <scope>FUNCTION</scope>
    <scope>SUBCELLULAR LOCATION</scope>
    <scope>MUTAGENESIS OF ILE-138</scope>
</reference>
<reference key="9">
    <citation type="journal article" date="2015" name="Biochemistry">
        <title>G Protein-Coupled Receptors Directly Bind Filamin A with High Affinity and Promote Filamin Phosphorylation.</title>
        <authorList>
            <person name="Tirupula K.C."/>
            <person name="Ithychanda S.S."/>
            <person name="Mohan M.L."/>
            <person name="Naga Prasad S.V."/>
            <person name="Qin J."/>
            <person name="Karnik S.S."/>
        </authorList>
    </citation>
    <scope>INTERACTION WITH FLNA</scope>
</reference>
<name>MAS_HUMAN</name>
<comment type="function">
    <text evidence="1 4 5">Receptor for angiotensin 1-7 (By similarity). Acts specifically as a functional antagonist of AGTR1 (angiotensin-2 type 1 receptor), although it up-regulates AGTR1 receptor levels. Positive regulation of AGTR1 levels occurs through activation of the G-proteins GNA11 and GNAQ, and stimulation of the protein kinase C signaling cascade. The antagonist effect on AGTR1 function is probably due to AGTR1 being physically altered by MAS1.</text>
</comment>
<comment type="subunit">
    <text evidence="6 8">Interacts with AGTR1. Interacts with FLNA (via filamin repeat 21); increases PKA-mediated phosphorylation of FLNA (PubMed:26460884).</text>
</comment>
<comment type="subcellular location">
    <subcellularLocation>
        <location evidence="5">Cell membrane</location>
        <topology evidence="5">Multi-pass membrane protein</topology>
    </subcellularLocation>
</comment>
<comment type="disease">
    <text evidence="7">The MAS oncogene has a weak focus-inducing activity in transfected NIH 3T3 cells.</text>
</comment>
<comment type="similarity">
    <text evidence="3">Belongs to the G-protein coupled receptor 1 family.</text>
</comment>
<comment type="caution">
    <text evidence="9">Was originally thought to be a receptor for angiotensin II.</text>
</comment>
<sequence>MDGSNVTSFVVEEPTNISTGRNASVGNAHRQIPIVHWVIMSISPVGFVENGILLWFLCFRMRRNPFTVYITHLSIADISLLFCIFILSIDYALDYELSSGHYYTIVTLSVTFLFGYNTGLYLLTAISVERCLSVLYPIWYRCHRPKYQSALVCALLWALSCLVTTMEYVMCIDREEESHSRNDCRAVIIFIAILSFLVFTPLMLVSSTILVVKIRKNTWASHSSKLYIVIMVTIIIFLIFAMPMRLLYLLYYEYWSTFGNLHHISLLFSTINSSANPFIYFFVGSSKKKRFKESLKVVLTRAFKDEMQPRRQKDNCNTVTVETVV</sequence>
<dbReference type="EMBL" id="M13150">
    <property type="protein sequence ID" value="AAA36199.1"/>
    <property type="molecule type" value="mRNA"/>
</dbReference>
<dbReference type="EMBL" id="CR542261">
    <property type="protein sequence ID" value="CAG47057.1"/>
    <property type="molecule type" value="mRNA"/>
</dbReference>
<dbReference type="EMBL" id="AL035691">
    <property type="status" value="NOT_ANNOTATED_CDS"/>
    <property type="molecule type" value="Genomic_DNA"/>
</dbReference>
<dbReference type="EMBL" id="CH471051">
    <property type="protein sequence ID" value="EAW47610.1"/>
    <property type="molecule type" value="Genomic_DNA"/>
</dbReference>
<dbReference type="EMBL" id="CH471051">
    <property type="protein sequence ID" value="EAW47611.1"/>
    <property type="molecule type" value="Genomic_DNA"/>
</dbReference>
<dbReference type="EMBL" id="BC069142">
    <property type="protein sequence ID" value="AAH69142.1"/>
    <property type="molecule type" value="mRNA"/>
</dbReference>
<dbReference type="EMBL" id="BC069581">
    <property type="protein sequence ID" value="AAH69581.1"/>
    <property type="molecule type" value="mRNA"/>
</dbReference>
<dbReference type="EMBL" id="BC110454">
    <property type="protein sequence ID" value="AAI10455.1"/>
    <property type="molecule type" value="mRNA"/>
</dbReference>
<dbReference type="CCDS" id="CCDS5272.1"/>
<dbReference type="PIR" id="A01375">
    <property type="entry name" value="TVHUAS"/>
</dbReference>
<dbReference type="RefSeq" id="NP_001353633.1">
    <property type="nucleotide sequence ID" value="NM_001366704.2"/>
</dbReference>
<dbReference type="RefSeq" id="NP_002368.1">
    <property type="nucleotide sequence ID" value="NM_002377.4"/>
</dbReference>
<dbReference type="RefSeq" id="XP_047274732.1">
    <property type="nucleotide sequence ID" value="XM_047418776.1"/>
</dbReference>
<dbReference type="RefSeq" id="XP_054211418.1">
    <property type="nucleotide sequence ID" value="XM_054355443.1"/>
</dbReference>
<dbReference type="SMR" id="P04201"/>
<dbReference type="BioGRID" id="110312">
    <property type="interactions" value="84"/>
</dbReference>
<dbReference type="CORUM" id="P04201"/>
<dbReference type="FunCoup" id="P04201">
    <property type="interactions" value="793"/>
</dbReference>
<dbReference type="IntAct" id="P04201">
    <property type="interactions" value="84"/>
</dbReference>
<dbReference type="STRING" id="9606.ENSP00000501180"/>
<dbReference type="BindingDB" id="P04201"/>
<dbReference type="ChEMBL" id="CHEMBL3559701"/>
<dbReference type="DrugBank" id="DB12631">
    <property type="generic name" value="Aclerastide"/>
</dbReference>
<dbReference type="DrugBank" id="DB11720">
    <property type="generic name" value="Angiotensin 1-7"/>
</dbReference>
<dbReference type="GuidetoPHARMACOLOGY" id="150"/>
<dbReference type="GlyCosmos" id="P04201">
    <property type="glycosylation" value="3 sites, No reported glycans"/>
</dbReference>
<dbReference type="GlyGen" id="P04201">
    <property type="glycosylation" value="4 sites, 1 O-linked glycan (1 site)"/>
</dbReference>
<dbReference type="iPTMnet" id="P04201"/>
<dbReference type="PhosphoSitePlus" id="P04201"/>
<dbReference type="BioMuta" id="MAS1"/>
<dbReference type="DMDM" id="135920"/>
<dbReference type="PaxDb" id="9606-ENSP00000252660"/>
<dbReference type="PeptideAtlas" id="P04201"/>
<dbReference type="ProteomicsDB" id="51677"/>
<dbReference type="Antibodypedia" id="2936">
    <property type="antibodies" value="359 antibodies from 30 providers"/>
</dbReference>
<dbReference type="DNASU" id="4142"/>
<dbReference type="Ensembl" id="ENST00000252660.5">
    <property type="protein sequence ID" value="ENSP00000252660.4"/>
    <property type="gene ID" value="ENSG00000130368.7"/>
</dbReference>
<dbReference type="Ensembl" id="ENST00000674077.2">
    <property type="protein sequence ID" value="ENSP00000501180.2"/>
    <property type="gene ID" value="ENSG00000130368.7"/>
</dbReference>
<dbReference type="GeneID" id="4142"/>
<dbReference type="KEGG" id="hsa:4142"/>
<dbReference type="MANE-Select" id="ENST00000674077.2">
    <property type="protein sequence ID" value="ENSP00000501180.2"/>
    <property type="RefSeq nucleotide sequence ID" value="NM_002377.4"/>
    <property type="RefSeq protein sequence ID" value="NP_002368.1"/>
</dbReference>
<dbReference type="AGR" id="HGNC:6899"/>
<dbReference type="CTD" id="4142"/>
<dbReference type="DisGeNET" id="4142"/>
<dbReference type="GeneCards" id="MAS1"/>
<dbReference type="HGNC" id="HGNC:6899">
    <property type="gene designation" value="MAS1"/>
</dbReference>
<dbReference type="HPA" id="ENSG00000130368">
    <property type="expression patterns" value="Tissue enhanced (brain)"/>
</dbReference>
<dbReference type="MIM" id="165180">
    <property type="type" value="gene"/>
</dbReference>
<dbReference type="neXtProt" id="NX_P04201"/>
<dbReference type="OpenTargets" id="ENSG00000130368"/>
<dbReference type="PharmGKB" id="PA30643"/>
<dbReference type="VEuPathDB" id="HostDB:ENSG00000130368"/>
<dbReference type="eggNOG" id="KOG3656">
    <property type="taxonomic scope" value="Eukaryota"/>
</dbReference>
<dbReference type="GeneTree" id="ENSGT01030000234639"/>
<dbReference type="HOGENOM" id="CLU_009579_4_1_1"/>
<dbReference type="InParanoid" id="P04201"/>
<dbReference type="OMA" id="DGNHCQA"/>
<dbReference type="OrthoDB" id="6091802at2759"/>
<dbReference type="PAN-GO" id="P04201">
    <property type="GO annotations" value="2 GO annotations based on evolutionary models"/>
</dbReference>
<dbReference type="PhylomeDB" id="P04201"/>
<dbReference type="TreeFam" id="TF336336"/>
<dbReference type="PathwayCommons" id="P04201"/>
<dbReference type="SignaLink" id="P04201"/>
<dbReference type="SIGNOR" id="P04201"/>
<dbReference type="BioGRID-ORCS" id="4142">
    <property type="hits" value="11 hits in 1146 CRISPR screens"/>
</dbReference>
<dbReference type="ChiTaRS" id="MAS1">
    <property type="organism name" value="human"/>
</dbReference>
<dbReference type="GeneWiki" id="MAS1"/>
<dbReference type="GenomeRNAi" id="4142"/>
<dbReference type="Pharos" id="P04201">
    <property type="development level" value="Tchem"/>
</dbReference>
<dbReference type="PRO" id="PR:P04201"/>
<dbReference type="Proteomes" id="UP000005640">
    <property type="component" value="Chromosome 6"/>
</dbReference>
<dbReference type="RNAct" id="P04201">
    <property type="molecule type" value="protein"/>
</dbReference>
<dbReference type="Bgee" id="ENSG00000130368">
    <property type="expression patterns" value="Expressed in male germ line stem cell (sensu Vertebrata) in testis and 25 other cell types or tissues"/>
</dbReference>
<dbReference type="ExpressionAtlas" id="P04201">
    <property type="expression patterns" value="baseline and differential"/>
</dbReference>
<dbReference type="GO" id="GO:0005886">
    <property type="term" value="C:plasma membrane"/>
    <property type="evidence" value="ECO:0000314"/>
    <property type="project" value="UniProtKB"/>
</dbReference>
<dbReference type="GO" id="GO:0001595">
    <property type="term" value="F:angiotensin receptor activity"/>
    <property type="evidence" value="ECO:0000250"/>
    <property type="project" value="UniProtKB"/>
</dbReference>
<dbReference type="GO" id="GO:0004945">
    <property type="term" value="F:angiotensin type II receptor activity"/>
    <property type="evidence" value="ECO:0000304"/>
    <property type="project" value="ProtInc"/>
</dbReference>
<dbReference type="GO" id="GO:0004930">
    <property type="term" value="F:G protein-coupled receptor activity"/>
    <property type="evidence" value="ECO:0000314"/>
    <property type="project" value="UniProtKB"/>
</dbReference>
<dbReference type="GO" id="GO:0042277">
    <property type="term" value="F:peptide binding"/>
    <property type="evidence" value="ECO:0000250"/>
    <property type="project" value="UniProtKB"/>
</dbReference>
<dbReference type="GO" id="GO:0007189">
    <property type="term" value="P:adenylate cyclase-activating G protein-coupled receptor signaling pathway"/>
    <property type="evidence" value="ECO:0007669"/>
    <property type="project" value="Ensembl"/>
</dbReference>
<dbReference type="GO" id="GO:0002033">
    <property type="term" value="P:angiotensin-mediated vasodilation involved in regulation of systemic arterial blood pressure"/>
    <property type="evidence" value="ECO:0007669"/>
    <property type="project" value="Ensembl"/>
</dbReference>
<dbReference type="GO" id="GO:0007186">
    <property type="term" value="P:G protein-coupled receptor signaling pathway"/>
    <property type="evidence" value="ECO:0000318"/>
    <property type="project" value="GO_Central"/>
</dbReference>
<dbReference type="GO" id="GO:0086097">
    <property type="term" value="P:phospholipase C-activating angiotensin-activated signaling pathway"/>
    <property type="evidence" value="ECO:0000315"/>
    <property type="project" value="UniProtKB"/>
</dbReference>
<dbReference type="GO" id="GO:0043123">
    <property type="term" value="P:positive regulation of canonical NF-kappaB signal transduction"/>
    <property type="evidence" value="ECO:0007669"/>
    <property type="project" value="Ensembl"/>
</dbReference>
<dbReference type="GO" id="GO:0050727">
    <property type="term" value="P:regulation of inflammatory response"/>
    <property type="evidence" value="ECO:0007669"/>
    <property type="project" value="Ensembl"/>
</dbReference>
<dbReference type="CDD" id="cd15110">
    <property type="entry name" value="7tmA_MrgprH"/>
    <property type="match status" value="1"/>
</dbReference>
<dbReference type="FunFam" id="1.20.1070.10:FF:000134">
    <property type="entry name" value="proto-oncogene Mas"/>
    <property type="match status" value="1"/>
</dbReference>
<dbReference type="Gene3D" id="1.20.1070.10">
    <property type="entry name" value="Rhodopsin 7-helix transmembrane proteins"/>
    <property type="match status" value="1"/>
</dbReference>
<dbReference type="InterPro" id="IPR000276">
    <property type="entry name" value="GPCR_Rhodpsn"/>
</dbReference>
<dbReference type="InterPro" id="IPR017452">
    <property type="entry name" value="GPCR_Rhodpsn_7TM"/>
</dbReference>
<dbReference type="InterPro" id="IPR026234">
    <property type="entry name" value="MRGPCRFAMILY"/>
</dbReference>
<dbReference type="InterPro" id="IPR000820">
    <property type="entry name" value="Proto-oncogene_Mas"/>
</dbReference>
<dbReference type="PANTHER" id="PTHR11334">
    <property type="entry name" value="MAS-RELATED G-PROTEIN COUPLED RECEPTOR"/>
    <property type="match status" value="1"/>
</dbReference>
<dbReference type="PANTHER" id="PTHR11334:SF61">
    <property type="entry name" value="PROTO-ONCOGENE MAS"/>
    <property type="match status" value="1"/>
</dbReference>
<dbReference type="Pfam" id="PF00001">
    <property type="entry name" value="7tm_1"/>
    <property type="match status" value="1"/>
</dbReference>
<dbReference type="PRINTS" id="PR00237">
    <property type="entry name" value="GPCRRHODOPSN"/>
</dbReference>
<dbReference type="PRINTS" id="PR00533">
    <property type="entry name" value="MASONCOGENE"/>
</dbReference>
<dbReference type="SUPFAM" id="SSF81321">
    <property type="entry name" value="Family A G protein-coupled receptor-like"/>
    <property type="match status" value="1"/>
</dbReference>
<dbReference type="PROSITE" id="PS00237">
    <property type="entry name" value="G_PROTEIN_RECEP_F1_1"/>
    <property type="match status" value="1"/>
</dbReference>
<dbReference type="PROSITE" id="PS50262">
    <property type="entry name" value="G_PROTEIN_RECEP_F1_2"/>
    <property type="match status" value="1"/>
</dbReference>